<organism>
    <name type="scientific">Clostridium botulinum (strain Loch Maree / Type A3)</name>
    <dbReference type="NCBI Taxonomy" id="498214"/>
    <lineage>
        <taxon>Bacteria</taxon>
        <taxon>Bacillati</taxon>
        <taxon>Bacillota</taxon>
        <taxon>Clostridia</taxon>
        <taxon>Eubacteriales</taxon>
        <taxon>Clostridiaceae</taxon>
        <taxon>Clostridium</taxon>
    </lineage>
</organism>
<reference key="1">
    <citation type="journal article" date="2007" name="PLoS ONE">
        <title>Analysis of the neurotoxin complex genes in Clostridium botulinum A1-A4 and B1 strains: BoNT/A3, /Ba4 and /B1 clusters are located within plasmids.</title>
        <authorList>
            <person name="Smith T.J."/>
            <person name="Hill K.K."/>
            <person name="Foley B.T."/>
            <person name="Detter J.C."/>
            <person name="Munk A.C."/>
            <person name="Bruce D.C."/>
            <person name="Doggett N.A."/>
            <person name="Smith L.A."/>
            <person name="Marks J.D."/>
            <person name="Xie G."/>
            <person name="Brettin T.S."/>
        </authorList>
    </citation>
    <scope>NUCLEOTIDE SEQUENCE [LARGE SCALE GENOMIC DNA]</scope>
    <source>
        <strain>Loch Maree / Type A3</strain>
    </source>
</reference>
<sequence>MNKEKAIVVFSGGQDSTTCLFWAKKKYEEVIAVSFDYNQKHKLELDCAKDICKKYNVEHHILDLNLLNQLAPNSLTRQDITVDKSAPKEGVPNSFVDGRNLLFLSFVAVFAKQKGVNTIITGVSQSDFSGYPDCRAVFIKSLNVTLDLAMDYEFEIITPLMWINKAETWKMAYDLGVLDIVKEETLTCYNGIKADGCGECPACKLRKKGYLEFEKQFMC</sequence>
<gene>
    <name evidence="1" type="primary">queC</name>
    <name type="ordered locus">CLK_1036</name>
</gene>
<feature type="chain" id="PRO_1000186578" description="7-cyano-7-deazaguanine synthase">
    <location>
        <begin position="1"/>
        <end position="219"/>
    </location>
</feature>
<feature type="binding site" evidence="1">
    <location>
        <begin position="10"/>
        <end position="20"/>
    </location>
    <ligand>
        <name>ATP</name>
        <dbReference type="ChEBI" id="CHEBI:30616"/>
    </ligand>
</feature>
<feature type="binding site" evidence="1">
    <location>
        <position position="188"/>
    </location>
    <ligand>
        <name>Zn(2+)</name>
        <dbReference type="ChEBI" id="CHEBI:29105"/>
    </ligand>
</feature>
<feature type="binding site" evidence="1">
    <location>
        <position position="197"/>
    </location>
    <ligand>
        <name>Zn(2+)</name>
        <dbReference type="ChEBI" id="CHEBI:29105"/>
    </ligand>
</feature>
<feature type="binding site" evidence="1">
    <location>
        <position position="200"/>
    </location>
    <ligand>
        <name>Zn(2+)</name>
        <dbReference type="ChEBI" id="CHEBI:29105"/>
    </ligand>
</feature>
<feature type="binding site" evidence="1">
    <location>
        <position position="203"/>
    </location>
    <ligand>
        <name>Zn(2+)</name>
        <dbReference type="ChEBI" id="CHEBI:29105"/>
    </ligand>
</feature>
<comment type="function">
    <text evidence="1">Catalyzes the ATP-dependent conversion of 7-carboxy-7-deazaguanine (CDG) to 7-cyano-7-deazaguanine (preQ(0)).</text>
</comment>
<comment type="catalytic activity">
    <reaction evidence="1">
        <text>7-carboxy-7-deazaguanine + NH4(+) + ATP = 7-cyano-7-deazaguanine + ADP + phosphate + H2O + H(+)</text>
        <dbReference type="Rhea" id="RHEA:27982"/>
        <dbReference type="ChEBI" id="CHEBI:15377"/>
        <dbReference type="ChEBI" id="CHEBI:15378"/>
        <dbReference type="ChEBI" id="CHEBI:28938"/>
        <dbReference type="ChEBI" id="CHEBI:30616"/>
        <dbReference type="ChEBI" id="CHEBI:43474"/>
        <dbReference type="ChEBI" id="CHEBI:45075"/>
        <dbReference type="ChEBI" id="CHEBI:61036"/>
        <dbReference type="ChEBI" id="CHEBI:456216"/>
        <dbReference type="EC" id="6.3.4.20"/>
    </reaction>
</comment>
<comment type="cofactor">
    <cofactor evidence="1">
        <name>Zn(2+)</name>
        <dbReference type="ChEBI" id="CHEBI:29105"/>
    </cofactor>
    <text evidence="1">Binds 1 zinc ion per subunit.</text>
</comment>
<comment type="pathway">
    <text evidence="1">Purine metabolism; 7-cyano-7-deazaguanine biosynthesis.</text>
</comment>
<comment type="subunit">
    <text evidence="1">Homodimer.</text>
</comment>
<comment type="similarity">
    <text evidence="1">Belongs to the QueC family.</text>
</comment>
<accession>B1L1S2</accession>
<protein>
    <recommendedName>
        <fullName evidence="1">7-cyano-7-deazaguanine synthase</fullName>
        <ecNumber evidence="1">6.3.4.20</ecNumber>
    </recommendedName>
    <alternativeName>
        <fullName evidence="1">7-cyano-7-carbaguanine synthase</fullName>
    </alternativeName>
    <alternativeName>
        <fullName evidence="1">PreQ(0) synthase</fullName>
    </alternativeName>
    <alternativeName>
        <fullName evidence="1">Queuosine biosynthesis protein QueC</fullName>
    </alternativeName>
</protein>
<evidence type="ECO:0000255" key="1">
    <source>
        <dbReference type="HAMAP-Rule" id="MF_01633"/>
    </source>
</evidence>
<proteinExistence type="inferred from homology"/>
<dbReference type="EC" id="6.3.4.20" evidence="1"/>
<dbReference type="EMBL" id="CP000962">
    <property type="protein sequence ID" value="ACA55565.1"/>
    <property type="molecule type" value="Genomic_DNA"/>
</dbReference>
<dbReference type="RefSeq" id="WP_012343529.1">
    <property type="nucleotide sequence ID" value="NC_010520.1"/>
</dbReference>
<dbReference type="SMR" id="B1L1S2"/>
<dbReference type="KEGG" id="cbl:CLK_1036"/>
<dbReference type="HOGENOM" id="CLU_081854_0_0_9"/>
<dbReference type="UniPathway" id="UPA00391"/>
<dbReference type="GO" id="GO:0005524">
    <property type="term" value="F:ATP binding"/>
    <property type="evidence" value="ECO:0007669"/>
    <property type="project" value="UniProtKB-UniRule"/>
</dbReference>
<dbReference type="GO" id="GO:0016879">
    <property type="term" value="F:ligase activity, forming carbon-nitrogen bonds"/>
    <property type="evidence" value="ECO:0007669"/>
    <property type="project" value="UniProtKB-UniRule"/>
</dbReference>
<dbReference type="GO" id="GO:0008270">
    <property type="term" value="F:zinc ion binding"/>
    <property type="evidence" value="ECO:0007669"/>
    <property type="project" value="UniProtKB-UniRule"/>
</dbReference>
<dbReference type="GO" id="GO:0008616">
    <property type="term" value="P:queuosine biosynthetic process"/>
    <property type="evidence" value="ECO:0007669"/>
    <property type="project" value="UniProtKB-UniRule"/>
</dbReference>
<dbReference type="CDD" id="cd01995">
    <property type="entry name" value="QueC-like"/>
    <property type="match status" value="1"/>
</dbReference>
<dbReference type="FunFam" id="3.40.50.620:FF:000017">
    <property type="entry name" value="7-cyano-7-deazaguanine synthase"/>
    <property type="match status" value="1"/>
</dbReference>
<dbReference type="Gene3D" id="3.40.50.620">
    <property type="entry name" value="HUPs"/>
    <property type="match status" value="1"/>
</dbReference>
<dbReference type="HAMAP" id="MF_01633">
    <property type="entry name" value="QueC"/>
    <property type="match status" value="1"/>
</dbReference>
<dbReference type="InterPro" id="IPR018317">
    <property type="entry name" value="QueC"/>
</dbReference>
<dbReference type="InterPro" id="IPR014729">
    <property type="entry name" value="Rossmann-like_a/b/a_fold"/>
</dbReference>
<dbReference type="NCBIfam" id="TIGR00364">
    <property type="entry name" value="7-cyano-7-deazaguanine synthase QueC"/>
    <property type="match status" value="1"/>
</dbReference>
<dbReference type="PANTHER" id="PTHR42914">
    <property type="entry name" value="7-CYANO-7-DEAZAGUANINE SYNTHASE"/>
    <property type="match status" value="1"/>
</dbReference>
<dbReference type="PANTHER" id="PTHR42914:SF1">
    <property type="entry name" value="7-CYANO-7-DEAZAGUANINE SYNTHASE"/>
    <property type="match status" value="1"/>
</dbReference>
<dbReference type="Pfam" id="PF06508">
    <property type="entry name" value="QueC"/>
    <property type="match status" value="1"/>
</dbReference>
<dbReference type="PIRSF" id="PIRSF006293">
    <property type="entry name" value="ExsB"/>
    <property type="match status" value="1"/>
</dbReference>
<dbReference type="SUPFAM" id="SSF52402">
    <property type="entry name" value="Adenine nucleotide alpha hydrolases-like"/>
    <property type="match status" value="1"/>
</dbReference>
<name>QUEC_CLOBM</name>
<keyword id="KW-0067">ATP-binding</keyword>
<keyword id="KW-0436">Ligase</keyword>
<keyword id="KW-0479">Metal-binding</keyword>
<keyword id="KW-0547">Nucleotide-binding</keyword>
<keyword id="KW-0671">Queuosine biosynthesis</keyword>
<keyword id="KW-0862">Zinc</keyword>